<evidence type="ECO:0000250" key="1">
    <source>
        <dbReference type="UniProtKB" id="Q86WI0"/>
    </source>
</evidence>
<evidence type="ECO:0000255" key="2"/>
<evidence type="ECO:0000269" key="3">
    <source>
    </source>
</evidence>
<evidence type="ECO:0000305" key="4"/>
<evidence type="ECO:0000312" key="5">
    <source>
        <dbReference type="MGI" id="MGI:1891214"/>
    </source>
</evidence>
<organism>
    <name type="scientific">Mus musculus</name>
    <name type="common">Mouse</name>
    <dbReference type="NCBI Taxonomy" id="10090"/>
    <lineage>
        <taxon>Eukaryota</taxon>
        <taxon>Metazoa</taxon>
        <taxon>Chordata</taxon>
        <taxon>Craniata</taxon>
        <taxon>Vertebrata</taxon>
        <taxon>Euteleostomi</taxon>
        <taxon>Mammalia</taxon>
        <taxon>Eutheria</taxon>
        <taxon>Euarchontoglires</taxon>
        <taxon>Glires</taxon>
        <taxon>Rodentia</taxon>
        <taxon>Myomorpha</taxon>
        <taxon>Muroidea</taxon>
        <taxon>Muridae</taxon>
        <taxon>Murinae</taxon>
        <taxon>Mus</taxon>
        <taxon>Mus</taxon>
    </lineage>
</organism>
<accession>Q80SV1</accession>
<feature type="signal peptide" evidence="2">
    <location>
        <begin position="1"/>
        <end position="20"/>
    </location>
</feature>
<feature type="chain" id="PRO_0000244761" description="LHFPL tetraspan subfamily member 1 protein">
    <location>
        <begin position="21"/>
        <end position="220"/>
    </location>
</feature>
<feature type="transmembrane region" description="Helical" evidence="2">
    <location>
        <begin position="86"/>
        <end position="106"/>
    </location>
</feature>
<feature type="transmembrane region" description="Helical" evidence="2">
    <location>
        <begin position="122"/>
        <end position="142"/>
    </location>
</feature>
<feature type="transmembrane region" description="Helical" evidence="2">
    <location>
        <begin position="165"/>
        <end position="185"/>
    </location>
</feature>
<feature type="glycosylation site" description="N-linked (GlcNAc...) asparagine" evidence="2">
    <location>
        <position position="153"/>
    </location>
</feature>
<reference key="1">
    <citation type="submission" date="2003-03" db="EMBL/GenBank/DDBJ databases">
        <authorList>
            <person name="Huang C.Q."/>
            <person name="Wu S.L."/>
            <person name="Liu S."/>
        </authorList>
    </citation>
    <scope>NUCLEOTIDE SEQUENCE [MRNA]</scope>
</reference>
<reference key="2">
    <citation type="journal article" date="2005" name="Science">
        <title>The transcriptional landscape of the mammalian genome.</title>
        <authorList>
            <person name="Carninci P."/>
            <person name="Kasukawa T."/>
            <person name="Katayama S."/>
            <person name="Gough J."/>
            <person name="Frith M.C."/>
            <person name="Maeda N."/>
            <person name="Oyama R."/>
            <person name="Ravasi T."/>
            <person name="Lenhard B."/>
            <person name="Wells C."/>
            <person name="Kodzius R."/>
            <person name="Shimokawa K."/>
            <person name="Bajic V.B."/>
            <person name="Brenner S.E."/>
            <person name="Batalov S."/>
            <person name="Forrest A.R."/>
            <person name="Zavolan M."/>
            <person name="Davis M.J."/>
            <person name="Wilming L.G."/>
            <person name="Aidinis V."/>
            <person name="Allen J.E."/>
            <person name="Ambesi-Impiombato A."/>
            <person name="Apweiler R."/>
            <person name="Aturaliya R.N."/>
            <person name="Bailey T.L."/>
            <person name="Bansal M."/>
            <person name="Baxter L."/>
            <person name="Beisel K.W."/>
            <person name="Bersano T."/>
            <person name="Bono H."/>
            <person name="Chalk A.M."/>
            <person name="Chiu K.P."/>
            <person name="Choudhary V."/>
            <person name="Christoffels A."/>
            <person name="Clutterbuck D.R."/>
            <person name="Crowe M.L."/>
            <person name="Dalla E."/>
            <person name="Dalrymple B.P."/>
            <person name="de Bono B."/>
            <person name="Della Gatta G."/>
            <person name="di Bernardo D."/>
            <person name="Down T."/>
            <person name="Engstrom P."/>
            <person name="Fagiolini M."/>
            <person name="Faulkner G."/>
            <person name="Fletcher C.F."/>
            <person name="Fukushima T."/>
            <person name="Furuno M."/>
            <person name="Futaki S."/>
            <person name="Gariboldi M."/>
            <person name="Georgii-Hemming P."/>
            <person name="Gingeras T.R."/>
            <person name="Gojobori T."/>
            <person name="Green R.E."/>
            <person name="Gustincich S."/>
            <person name="Harbers M."/>
            <person name="Hayashi Y."/>
            <person name="Hensch T.K."/>
            <person name="Hirokawa N."/>
            <person name="Hill D."/>
            <person name="Huminiecki L."/>
            <person name="Iacono M."/>
            <person name="Ikeo K."/>
            <person name="Iwama A."/>
            <person name="Ishikawa T."/>
            <person name="Jakt M."/>
            <person name="Kanapin A."/>
            <person name="Katoh M."/>
            <person name="Kawasawa Y."/>
            <person name="Kelso J."/>
            <person name="Kitamura H."/>
            <person name="Kitano H."/>
            <person name="Kollias G."/>
            <person name="Krishnan S.P."/>
            <person name="Kruger A."/>
            <person name="Kummerfeld S.K."/>
            <person name="Kurochkin I.V."/>
            <person name="Lareau L.F."/>
            <person name="Lazarevic D."/>
            <person name="Lipovich L."/>
            <person name="Liu J."/>
            <person name="Liuni S."/>
            <person name="McWilliam S."/>
            <person name="Madan Babu M."/>
            <person name="Madera M."/>
            <person name="Marchionni L."/>
            <person name="Matsuda H."/>
            <person name="Matsuzawa S."/>
            <person name="Miki H."/>
            <person name="Mignone F."/>
            <person name="Miyake S."/>
            <person name="Morris K."/>
            <person name="Mottagui-Tabar S."/>
            <person name="Mulder N."/>
            <person name="Nakano N."/>
            <person name="Nakauchi H."/>
            <person name="Ng P."/>
            <person name="Nilsson R."/>
            <person name="Nishiguchi S."/>
            <person name="Nishikawa S."/>
            <person name="Nori F."/>
            <person name="Ohara O."/>
            <person name="Okazaki Y."/>
            <person name="Orlando V."/>
            <person name="Pang K.C."/>
            <person name="Pavan W.J."/>
            <person name="Pavesi G."/>
            <person name="Pesole G."/>
            <person name="Petrovsky N."/>
            <person name="Piazza S."/>
            <person name="Reed J."/>
            <person name="Reid J.F."/>
            <person name="Ring B.Z."/>
            <person name="Ringwald M."/>
            <person name="Rost B."/>
            <person name="Ruan Y."/>
            <person name="Salzberg S.L."/>
            <person name="Sandelin A."/>
            <person name="Schneider C."/>
            <person name="Schoenbach C."/>
            <person name="Sekiguchi K."/>
            <person name="Semple C.A."/>
            <person name="Seno S."/>
            <person name="Sessa L."/>
            <person name="Sheng Y."/>
            <person name="Shibata Y."/>
            <person name="Shimada H."/>
            <person name="Shimada K."/>
            <person name="Silva D."/>
            <person name="Sinclair B."/>
            <person name="Sperling S."/>
            <person name="Stupka E."/>
            <person name="Sugiura K."/>
            <person name="Sultana R."/>
            <person name="Takenaka Y."/>
            <person name="Taki K."/>
            <person name="Tammoja K."/>
            <person name="Tan S.L."/>
            <person name="Tang S."/>
            <person name="Taylor M.S."/>
            <person name="Tegner J."/>
            <person name="Teichmann S.A."/>
            <person name="Ueda H.R."/>
            <person name="van Nimwegen E."/>
            <person name="Verardo R."/>
            <person name="Wei C.L."/>
            <person name="Yagi K."/>
            <person name="Yamanishi H."/>
            <person name="Zabarovsky E."/>
            <person name="Zhu S."/>
            <person name="Zimmer A."/>
            <person name="Hide W."/>
            <person name="Bult C."/>
            <person name="Grimmond S.M."/>
            <person name="Teasdale R.D."/>
            <person name="Liu E.T."/>
            <person name="Brusic V."/>
            <person name="Quackenbush J."/>
            <person name="Wahlestedt C."/>
            <person name="Mattick J.S."/>
            <person name="Hume D.A."/>
            <person name="Kai C."/>
            <person name="Sasaki D."/>
            <person name="Tomaru Y."/>
            <person name="Fukuda S."/>
            <person name="Kanamori-Katayama M."/>
            <person name="Suzuki M."/>
            <person name="Aoki J."/>
            <person name="Arakawa T."/>
            <person name="Iida J."/>
            <person name="Imamura K."/>
            <person name="Itoh M."/>
            <person name="Kato T."/>
            <person name="Kawaji H."/>
            <person name="Kawagashira N."/>
            <person name="Kawashima T."/>
            <person name="Kojima M."/>
            <person name="Kondo S."/>
            <person name="Konno H."/>
            <person name="Nakano K."/>
            <person name="Ninomiya N."/>
            <person name="Nishio T."/>
            <person name="Okada M."/>
            <person name="Plessy C."/>
            <person name="Shibata K."/>
            <person name="Shiraki T."/>
            <person name="Suzuki S."/>
            <person name="Tagami M."/>
            <person name="Waki K."/>
            <person name="Watahiki A."/>
            <person name="Okamura-Oho Y."/>
            <person name="Suzuki H."/>
            <person name="Kawai J."/>
            <person name="Hayashizaki Y."/>
        </authorList>
    </citation>
    <scope>NUCLEOTIDE SEQUENCE [LARGE SCALE MRNA]</scope>
    <source>
        <strain>C57BL/6J</strain>
        <tissue>Kidney</tissue>
    </source>
</reference>
<reference key="3">
    <citation type="journal article" date="2004" name="Genome Res.">
        <title>The status, quality, and expansion of the NIH full-length cDNA project: the Mammalian Gene Collection (MGC).</title>
        <authorList>
            <consortium name="The MGC Project Team"/>
        </authorList>
    </citation>
    <scope>NUCLEOTIDE SEQUENCE [LARGE SCALE MRNA]</scope>
    <source>
        <tissue>Olfactory epithelium</tissue>
    </source>
</reference>
<reference key="4">
    <citation type="journal article" date="2016" name="Sci. Rep.">
        <title>Novel function of LHFPL2 in female and male distal reproductive tract development.</title>
        <authorList>
            <person name="Zhao F."/>
            <person name="Zhou J."/>
            <person name="Li R."/>
            <person name="Dudley E.A."/>
            <person name="Ye X."/>
        </authorList>
    </citation>
    <scope>TISSUE SPECIFICITY</scope>
</reference>
<sequence>MRNSLTMVGTFWAFLSLVTAVASSTSYFLPYWLFGSQLGKPVSFSTFRRCNYPVRGDGHNLIMVEECGRYASFTAIPSLAWQMCTVVTGAGCALLLLVALAAVLGCCMEELISRMMGRCMGAAQFVGGLLISAGCALYPLGWNSPEVMQTCGNVSNQFQLGTCRLGWAYYCAGGGAAAAMLICTWLSCFAGRNPKPVMLVENIMRNTNSYALELDHCLKP</sequence>
<keyword id="KW-0325">Glycoprotein</keyword>
<keyword id="KW-0472">Membrane</keyword>
<keyword id="KW-1185">Reference proteome</keyword>
<keyword id="KW-0732">Signal</keyword>
<keyword id="KW-0812">Transmembrane</keyword>
<keyword id="KW-1133">Transmembrane helix</keyword>
<proteinExistence type="evidence at transcript level"/>
<protein>
    <recommendedName>
        <fullName evidence="1">LHFPL tetraspan subfamily member 1 protein</fullName>
    </recommendedName>
    <alternativeName>
        <fullName evidence="5">Lipoma HMGIC fusion partner-like 1 protein</fullName>
    </alternativeName>
</protein>
<name>LHPL1_MOUSE</name>
<gene>
    <name evidence="5" type="primary">Lhfpl1</name>
    <name type="synonym">Lhfpl</name>
</gene>
<dbReference type="EMBL" id="AY253666">
    <property type="protein sequence ID" value="AAP14355.1"/>
    <property type="molecule type" value="mRNA"/>
</dbReference>
<dbReference type="EMBL" id="AK142526">
    <property type="protein sequence ID" value="BAE25096.1"/>
    <property type="molecule type" value="mRNA"/>
</dbReference>
<dbReference type="EMBL" id="BC051434">
    <property type="protein sequence ID" value="AAH51434.1"/>
    <property type="molecule type" value="mRNA"/>
</dbReference>
<dbReference type="CCDS" id="CCDS30458.1"/>
<dbReference type="RefSeq" id="NP_848135.1">
    <property type="nucleotide sequence ID" value="NM_178358.4"/>
</dbReference>
<dbReference type="RefSeq" id="XP_006528863.1">
    <property type="nucleotide sequence ID" value="XM_006528800.3"/>
</dbReference>
<dbReference type="RefSeq" id="XP_006528864.1">
    <property type="nucleotide sequence ID" value="XM_006528801.4"/>
</dbReference>
<dbReference type="SMR" id="Q80SV1"/>
<dbReference type="FunCoup" id="Q80SV1">
    <property type="interactions" value="353"/>
</dbReference>
<dbReference type="STRING" id="10090.ENSMUSP00000044054"/>
<dbReference type="GlyCosmos" id="Q80SV1">
    <property type="glycosylation" value="1 site, No reported glycans"/>
</dbReference>
<dbReference type="GlyGen" id="Q80SV1">
    <property type="glycosylation" value="1 site"/>
</dbReference>
<dbReference type="PaxDb" id="10090-ENSMUSP00000044054"/>
<dbReference type="Antibodypedia" id="559">
    <property type="antibodies" value="84 antibodies from 16 providers"/>
</dbReference>
<dbReference type="Ensembl" id="ENSMUST00000040084.10">
    <property type="protein sequence ID" value="ENSMUSP00000044054.10"/>
    <property type="gene ID" value="ENSMUSG00000041700.10"/>
</dbReference>
<dbReference type="GeneID" id="237091"/>
<dbReference type="KEGG" id="mmu:237091"/>
<dbReference type="UCSC" id="uc009umz.1">
    <property type="organism name" value="mouse"/>
</dbReference>
<dbReference type="AGR" id="MGI:1891214"/>
<dbReference type="CTD" id="340596"/>
<dbReference type="MGI" id="MGI:1891214">
    <property type="gene designation" value="Lhfpl1"/>
</dbReference>
<dbReference type="VEuPathDB" id="HostDB:ENSMUSG00000041700"/>
<dbReference type="eggNOG" id="KOG4026">
    <property type="taxonomic scope" value="Eukaryota"/>
</dbReference>
<dbReference type="GeneTree" id="ENSGT00990000203589"/>
<dbReference type="HOGENOM" id="CLU_084868_2_0_1"/>
<dbReference type="InParanoid" id="Q80SV1"/>
<dbReference type="OMA" id="VMQTCGN"/>
<dbReference type="OrthoDB" id="9938692at2759"/>
<dbReference type="PhylomeDB" id="Q80SV1"/>
<dbReference type="TreeFam" id="TF321143"/>
<dbReference type="BioGRID-ORCS" id="237091">
    <property type="hits" value="4 hits in 77 CRISPR screens"/>
</dbReference>
<dbReference type="ChiTaRS" id="Lhfpl1">
    <property type="organism name" value="mouse"/>
</dbReference>
<dbReference type="PRO" id="PR:Q80SV1"/>
<dbReference type="Proteomes" id="UP000000589">
    <property type="component" value="Chromosome X"/>
</dbReference>
<dbReference type="RNAct" id="Q80SV1">
    <property type="molecule type" value="protein"/>
</dbReference>
<dbReference type="Bgee" id="ENSMUSG00000041700">
    <property type="expression patterns" value="Expressed in animal zygote and 37 other cell types or tissues"/>
</dbReference>
<dbReference type="ExpressionAtlas" id="Q80SV1">
    <property type="expression patterns" value="baseline and differential"/>
</dbReference>
<dbReference type="GO" id="GO:0016020">
    <property type="term" value="C:membrane"/>
    <property type="evidence" value="ECO:0007669"/>
    <property type="project" value="UniProtKB-SubCell"/>
</dbReference>
<dbReference type="InterPro" id="IPR019372">
    <property type="entry name" value="LHFPL"/>
</dbReference>
<dbReference type="PANTHER" id="PTHR12489:SF15">
    <property type="entry name" value="LHFPL TETRASPAN SUBFAMILY MEMBER 1 PROTEIN"/>
    <property type="match status" value="1"/>
</dbReference>
<dbReference type="PANTHER" id="PTHR12489">
    <property type="entry name" value="LIPOMA HMGIC FUSION PARTNER-LIKE PROTEIN"/>
    <property type="match status" value="1"/>
</dbReference>
<dbReference type="Pfam" id="PF10242">
    <property type="entry name" value="L_HMGIC_fpl"/>
    <property type="match status" value="1"/>
</dbReference>
<comment type="subcellular location">
    <subcellularLocation>
        <location evidence="4">Membrane</location>
        <topology evidence="4">Multi-pass membrane protein</topology>
    </subcellularLocation>
</comment>
<comment type="tissue specificity">
    <text evidence="3">Widely expressed (PubMed:26964900). Strongly expressed in vagina and ovary. Weakly expressed in spleen, kidney, thymus, testis, brain, lung, intestine and uterus (PubMed:26964900).</text>
</comment>
<comment type="similarity">
    <text evidence="4">Belongs to the LHFP family.</text>
</comment>